<dbReference type="EMBL" id="AB070186">
    <property type="protein sequence ID" value="BAB63131.1"/>
    <property type="molecule type" value="mRNA"/>
</dbReference>
<dbReference type="SMR" id="Q95JJ5"/>
<dbReference type="STRING" id="9541.ENSMFAP00000029121"/>
<dbReference type="eggNOG" id="ENOG502QU8J">
    <property type="taxonomic scope" value="Eukaryota"/>
</dbReference>
<dbReference type="Proteomes" id="UP000233100">
    <property type="component" value="Unplaced"/>
</dbReference>
<dbReference type="Gene3D" id="1.20.5.340">
    <property type="match status" value="1"/>
</dbReference>
<dbReference type="InterPro" id="IPR038798">
    <property type="entry name" value="CCDC138"/>
</dbReference>
<dbReference type="InterPro" id="IPR048750">
    <property type="entry name" value="CCDC138_C"/>
</dbReference>
<dbReference type="InterPro" id="IPR048751">
    <property type="entry name" value="CCDC138_cc"/>
</dbReference>
<dbReference type="PANTHER" id="PTHR34523">
    <property type="entry name" value="COILED-COIL DOMAIN-CONTAINING PROTEIN 138"/>
    <property type="match status" value="1"/>
</dbReference>
<dbReference type="PANTHER" id="PTHR34523:SF1">
    <property type="entry name" value="COILED-COIL DOMAIN-CONTAINING PROTEIN 138"/>
    <property type="match status" value="1"/>
</dbReference>
<dbReference type="Pfam" id="PF21035">
    <property type="entry name" value="CCDC138_C"/>
    <property type="match status" value="1"/>
</dbReference>
<dbReference type="Pfam" id="PF21037">
    <property type="entry name" value="CCDC138_cc"/>
    <property type="match status" value="1"/>
</dbReference>
<accession>Q95JJ5</accession>
<evidence type="ECO:0000250" key="1">
    <source>
        <dbReference type="UniProtKB" id="Q96M89"/>
    </source>
</evidence>
<evidence type="ECO:0000255" key="2"/>
<proteinExistence type="evidence at transcript level"/>
<reference key="1">
    <citation type="journal article" date="2002" name="BMC Genomics">
        <title>Cynomolgus monkey testicular cDNAs for discovery of novel human genes in the human genome sequence.</title>
        <authorList>
            <person name="Osada N."/>
            <person name="Hida M."/>
            <person name="Kusuda J."/>
            <person name="Tanuma R."/>
            <person name="Hirata M."/>
            <person name="Suto Y."/>
            <person name="Hirai M."/>
            <person name="Terao K."/>
            <person name="Sugano S."/>
            <person name="Hashimoto K."/>
        </authorList>
    </citation>
    <scope>NUCLEOTIDE SEQUENCE [LARGE SCALE MRNA]</scope>
    <source>
        <tissue>Testis</tissue>
    </source>
</reference>
<keyword id="KW-0175">Coiled coil</keyword>
<keyword id="KW-0597">Phosphoprotein</keyword>
<keyword id="KW-1185">Reference proteome</keyword>
<name>CC138_MACFA</name>
<sequence>MEPRVVKPPGQDLVVERLKSRYGLGGSCPDEYDFSNFDQSKCKRRTLTSPGDLDIYSGDKVGSSLKYSDESKHCRTPLCSLFKRVNVNCLDDELDSFHDLKKRETEEELIENDYRVSTSKITKQSFKDIEKVALPTNTTSSRPRTECCSDAGDSPLKLVSYPKSRASDKRSLLPRQISQIYDELFQIHLKLQCETAAQQKFAEELQKRERFLLEREQLLFRHEDALSKIKGVEEEVLTRFQIMKEQHDAEVEHLTEVLKEKNKETKRLRSSFDALKELNDTLKKQLNEASEENRKMDIQAKRVQARLDNLQRKYEFMTIQRLKGSSHAVHEMKSLKQEKAPVSKTYKVPLNGQVYELLTVFMDWISDHHLSKVKHEESGMDGKKPQLKFASQRNDIQEKCVKLLPLMTEQLQWMPFVNTKLHEPFVKFIYWSLRQLDAGAQHSTMTSTLRRLGEDIFKGVVTKGIQDSSPQHSVENKPKTAAFFKSSNLPLRFLSTLIVLKTVTQADYLAQAFNSLCLDLKTEEGKTLFLEYQAVPVILSHLRISSKGLLSNVIDSLLQMTVESKSLQPFLEACSNSSFFRTCSVLLRAPKLDLQILEKLSTILQKLSKIKSNKKLFELFTIHLMLQEIQRTTNPEHAFLCINLNSTLFNLGLTKCNSLVSSASH</sequence>
<gene>
    <name type="primary">CCDC138</name>
    <name type="ORF">QtsA-16791</name>
</gene>
<protein>
    <recommendedName>
        <fullName>Coiled-coil domain-containing protein 138</fullName>
    </recommendedName>
</protein>
<organism>
    <name type="scientific">Macaca fascicularis</name>
    <name type="common">Crab-eating macaque</name>
    <name type="synonym">Cynomolgus monkey</name>
    <dbReference type="NCBI Taxonomy" id="9541"/>
    <lineage>
        <taxon>Eukaryota</taxon>
        <taxon>Metazoa</taxon>
        <taxon>Chordata</taxon>
        <taxon>Craniata</taxon>
        <taxon>Vertebrata</taxon>
        <taxon>Euteleostomi</taxon>
        <taxon>Mammalia</taxon>
        <taxon>Eutheria</taxon>
        <taxon>Euarchontoglires</taxon>
        <taxon>Primates</taxon>
        <taxon>Haplorrhini</taxon>
        <taxon>Catarrhini</taxon>
        <taxon>Cercopithecidae</taxon>
        <taxon>Cercopithecinae</taxon>
        <taxon>Macaca</taxon>
    </lineage>
</organism>
<feature type="chain" id="PRO_0000288455" description="Coiled-coil domain-containing protein 138">
    <location>
        <begin position="1"/>
        <end position="665"/>
    </location>
</feature>
<feature type="coiled-coil region" evidence="2">
    <location>
        <begin position="198"/>
        <end position="323"/>
    </location>
</feature>
<feature type="modified residue" description="Phosphothreonine" evidence="1">
    <location>
        <position position="48"/>
    </location>
</feature>
<feature type="modified residue" description="Phosphoserine" evidence="1">
    <location>
        <position position="49"/>
    </location>
</feature>
<feature type="modified residue" description="Phosphoserine" evidence="1">
    <location>
        <position position="469"/>
    </location>
</feature>